<proteinExistence type="inferred from homology"/>
<dbReference type="EC" id="2.1.3.-" evidence="1"/>
<dbReference type="EMBL" id="CP001091">
    <property type="protein sequence ID" value="ACE61449.1"/>
    <property type="molecule type" value="Genomic_DNA"/>
</dbReference>
<dbReference type="RefSeq" id="WP_005607644.1">
    <property type="nucleotide sequence ID" value="NC_010939.1"/>
</dbReference>
<dbReference type="SMR" id="B3GXJ0"/>
<dbReference type="KEGG" id="apa:APP7_0797"/>
<dbReference type="HOGENOM" id="CLU_078475_0_0_6"/>
<dbReference type="Proteomes" id="UP000001226">
    <property type="component" value="Chromosome"/>
</dbReference>
<dbReference type="GO" id="GO:0016743">
    <property type="term" value="F:carboxyl- or carbamoyltransferase activity"/>
    <property type="evidence" value="ECO:0007669"/>
    <property type="project" value="UniProtKB-UniRule"/>
</dbReference>
<dbReference type="GO" id="GO:1904047">
    <property type="term" value="F:S-adenosyl-L-methionine binding"/>
    <property type="evidence" value="ECO:0007669"/>
    <property type="project" value="UniProtKB-UniRule"/>
</dbReference>
<dbReference type="GO" id="GO:0002098">
    <property type="term" value="P:tRNA wobble uridine modification"/>
    <property type="evidence" value="ECO:0007669"/>
    <property type="project" value="InterPro"/>
</dbReference>
<dbReference type="CDD" id="cd02440">
    <property type="entry name" value="AdoMet_MTases"/>
    <property type="match status" value="1"/>
</dbReference>
<dbReference type="Gene3D" id="3.40.50.150">
    <property type="entry name" value="Vaccinia Virus protein VP39"/>
    <property type="match status" value="1"/>
</dbReference>
<dbReference type="HAMAP" id="MF_01589">
    <property type="entry name" value="Cx_SAM_synthase"/>
    <property type="match status" value="1"/>
</dbReference>
<dbReference type="InterPro" id="IPR005271">
    <property type="entry name" value="CmoA"/>
</dbReference>
<dbReference type="InterPro" id="IPR041698">
    <property type="entry name" value="Methyltransf_25"/>
</dbReference>
<dbReference type="InterPro" id="IPR029063">
    <property type="entry name" value="SAM-dependent_MTases_sf"/>
</dbReference>
<dbReference type="NCBIfam" id="TIGR00740">
    <property type="entry name" value="carboxy-S-adenosyl-L-methionine synthase CmoA"/>
    <property type="match status" value="1"/>
</dbReference>
<dbReference type="NCBIfam" id="NF011995">
    <property type="entry name" value="PRK15451.1"/>
    <property type="match status" value="1"/>
</dbReference>
<dbReference type="PANTHER" id="PTHR43861:SF2">
    <property type="entry name" value="CARBOXY-S-ADENOSYL-L-METHIONINE SYNTHASE"/>
    <property type="match status" value="1"/>
</dbReference>
<dbReference type="PANTHER" id="PTHR43861">
    <property type="entry name" value="TRANS-ACONITATE 2-METHYLTRANSFERASE-RELATED"/>
    <property type="match status" value="1"/>
</dbReference>
<dbReference type="Pfam" id="PF13649">
    <property type="entry name" value="Methyltransf_25"/>
    <property type="match status" value="1"/>
</dbReference>
<dbReference type="PIRSF" id="PIRSF006325">
    <property type="entry name" value="MeTrfase_bac"/>
    <property type="match status" value="1"/>
</dbReference>
<dbReference type="SUPFAM" id="SSF53335">
    <property type="entry name" value="S-adenosyl-L-methionine-dependent methyltransferases"/>
    <property type="match status" value="1"/>
</dbReference>
<name>CMOA_ACTP7</name>
<comment type="function">
    <text evidence="1">Catalyzes the conversion of S-adenosyl-L-methionine (SAM) to carboxy-S-adenosyl-L-methionine (Cx-SAM).</text>
</comment>
<comment type="catalytic activity">
    <reaction evidence="1">
        <text>prephenate + S-adenosyl-L-methionine = carboxy-S-adenosyl-L-methionine + 3-phenylpyruvate + H2O</text>
        <dbReference type="Rhea" id="RHEA:51692"/>
        <dbReference type="ChEBI" id="CHEBI:15377"/>
        <dbReference type="ChEBI" id="CHEBI:18005"/>
        <dbReference type="ChEBI" id="CHEBI:29934"/>
        <dbReference type="ChEBI" id="CHEBI:59789"/>
        <dbReference type="ChEBI" id="CHEBI:134278"/>
    </reaction>
</comment>
<comment type="subunit">
    <text evidence="1">Homodimer.</text>
</comment>
<comment type="similarity">
    <text evidence="1">Belongs to the class I-like SAM-binding methyltransferase superfamily. Cx-SAM synthase family.</text>
</comment>
<gene>
    <name evidence="1" type="primary">cmoA</name>
    <name type="ordered locus">APP7_0797</name>
</gene>
<organism>
    <name type="scientific">Actinobacillus pleuropneumoniae serotype 7 (strain AP76)</name>
    <dbReference type="NCBI Taxonomy" id="537457"/>
    <lineage>
        <taxon>Bacteria</taxon>
        <taxon>Pseudomonadati</taxon>
        <taxon>Pseudomonadota</taxon>
        <taxon>Gammaproteobacteria</taxon>
        <taxon>Pasteurellales</taxon>
        <taxon>Pasteurellaceae</taxon>
        <taxon>Actinobacillus</taxon>
    </lineage>
</organism>
<reference key="1">
    <citation type="submission" date="2008-06" db="EMBL/GenBank/DDBJ databases">
        <title>Genome and proteome analysis of A. pleuropneumoniae serotype 7.</title>
        <authorList>
            <person name="Linke B."/>
            <person name="Buettner F."/>
            <person name="Martinez-Arias R."/>
            <person name="Goesmann A."/>
            <person name="Baltes N."/>
            <person name="Tegetmeyer H."/>
            <person name="Singh M."/>
            <person name="Gerlach G.F."/>
        </authorList>
    </citation>
    <scope>NUCLEOTIDE SEQUENCE [LARGE SCALE GENOMIC DNA]</scope>
    <source>
        <strain>AP76</strain>
    </source>
</reference>
<protein>
    <recommendedName>
        <fullName evidence="1">Carboxy-S-adenosyl-L-methionine synthase</fullName>
        <shortName evidence="1">Cx-SAM synthase</shortName>
        <ecNumber evidence="1">2.1.3.-</ecNumber>
    </recommendedName>
</protein>
<feature type="chain" id="PRO_1000201342" description="Carboxy-S-adenosyl-L-methionine synthase">
    <location>
        <begin position="1"/>
        <end position="241"/>
    </location>
</feature>
<feature type="binding site" evidence="1">
    <location>
        <position position="38"/>
    </location>
    <ligand>
        <name>S-adenosyl-L-methionine</name>
        <dbReference type="ChEBI" id="CHEBI:59789"/>
    </ligand>
</feature>
<feature type="binding site" evidence="1">
    <location>
        <begin position="63"/>
        <end position="65"/>
    </location>
    <ligand>
        <name>S-adenosyl-L-methionine</name>
        <dbReference type="ChEBI" id="CHEBI:59789"/>
    </ligand>
</feature>
<feature type="binding site" evidence="1">
    <location>
        <begin position="88"/>
        <end position="89"/>
    </location>
    <ligand>
        <name>S-adenosyl-L-methionine</name>
        <dbReference type="ChEBI" id="CHEBI:59789"/>
    </ligand>
</feature>
<feature type="binding site" evidence="1">
    <location>
        <begin position="116"/>
        <end position="117"/>
    </location>
    <ligand>
        <name>S-adenosyl-L-methionine</name>
        <dbReference type="ChEBI" id="CHEBI:59789"/>
    </ligand>
</feature>
<feature type="binding site" evidence="1">
    <location>
        <position position="131"/>
    </location>
    <ligand>
        <name>S-adenosyl-L-methionine</name>
        <dbReference type="ChEBI" id="CHEBI:59789"/>
    </ligand>
</feature>
<feature type="binding site" evidence="1">
    <location>
        <position position="198"/>
    </location>
    <ligand>
        <name>S-adenosyl-L-methionine</name>
        <dbReference type="ChEBI" id="CHEBI:59789"/>
    </ligand>
</feature>
<sequence>MNKDTIFSAPIEKLGDFTFDESVAEVFPDMIQRSVPGYSNIITAIGMLAQRFVTEGSQVYDLGCSRGAGILSIRRNLQTNQVKIIGVDNSQPMVERCRSHINAYHSDVPVEILCDDIRHIEIKNASMVVLNFTLQFLPRADRLELLTKIYQGLNPNGILVLSEKFTFTNQAMSELLIDLHHTFKRANGYSELEVSQKRTALENVMLTDSIETHKDRLKQAGFSQIELWFQCFNFGSMIAVK</sequence>
<accession>B3GXJ0</accession>
<evidence type="ECO:0000255" key="1">
    <source>
        <dbReference type="HAMAP-Rule" id="MF_01589"/>
    </source>
</evidence>
<keyword id="KW-0949">S-adenosyl-L-methionine</keyword>
<keyword id="KW-0808">Transferase</keyword>